<evidence type="ECO:0000250" key="1"/>
<evidence type="ECO:0000255" key="2">
    <source>
        <dbReference type="HAMAP-Rule" id="MF_00768"/>
    </source>
</evidence>
<comment type="function">
    <text evidence="1">Repressor involved in the biosynthesis of the osmoprotectant glycine betaine. It represses transcription of the choline transporter BetT and the genes of BetAB involved in the synthesis of glycine betaine (By similarity).</text>
</comment>
<comment type="pathway">
    <text>Amine and polyamine biosynthesis; betaine biosynthesis via choline pathway [regulation].</text>
</comment>
<protein>
    <recommendedName>
        <fullName evidence="2">HTH-type transcriptional regulator BetI</fullName>
    </recommendedName>
</protein>
<reference key="1">
    <citation type="submission" date="2009-02" db="EMBL/GenBank/DDBJ databases">
        <title>Vibrio splendidus str. LGP32 complete genome.</title>
        <authorList>
            <person name="Mazel D."/>
            <person name="Le Roux F."/>
        </authorList>
    </citation>
    <scope>NUCLEOTIDE SEQUENCE [LARGE SCALE GENOMIC DNA]</scope>
    <source>
        <strain>LGP32</strain>
    </source>
</reference>
<sequence length="200" mass="22472">MPKVGMPDIRKPQLVQATMTVIDRVGLHAASIALISKEAGVSTGIINHYFGGKHGLLEETMREILRQLSNTVTTELKALPADAHQQRINAIINGNFEGYQAENKVSKTWLAFWSYSMHDAQLKRLQRVNEKRLISHLLIELKSIFQPDQAELIAHGIASLIDGIWLRGTLNPEGINADKARAIINDYLDKQLTFYSCQRD</sequence>
<feature type="chain" id="PRO_1000148447" description="HTH-type transcriptional regulator BetI">
    <location>
        <begin position="1"/>
        <end position="200"/>
    </location>
</feature>
<feature type="domain" description="HTH tetR-type" evidence="2">
    <location>
        <begin position="8"/>
        <end position="68"/>
    </location>
</feature>
<feature type="DNA-binding region" description="H-T-H motif" evidence="2">
    <location>
        <begin position="31"/>
        <end position="50"/>
    </location>
</feature>
<dbReference type="EMBL" id="FM954973">
    <property type="protein sequence ID" value="CAV25275.1"/>
    <property type="molecule type" value="Genomic_DNA"/>
</dbReference>
<dbReference type="SMR" id="B7VQ27"/>
<dbReference type="STRING" id="575788.VS_II0056"/>
<dbReference type="KEGG" id="vsp:VS_II0056"/>
<dbReference type="eggNOG" id="COG1309">
    <property type="taxonomic scope" value="Bacteria"/>
</dbReference>
<dbReference type="HOGENOM" id="CLU_069356_15_4_6"/>
<dbReference type="UniPathway" id="UPA00529"/>
<dbReference type="Proteomes" id="UP000009100">
    <property type="component" value="Chromosome 2"/>
</dbReference>
<dbReference type="GO" id="GO:0003700">
    <property type="term" value="F:DNA-binding transcription factor activity"/>
    <property type="evidence" value="ECO:0007669"/>
    <property type="project" value="UniProtKB-UniRule"/>
</dbReference>
<dbReference type="GO" id="GO:0000976">
    <property type="term" value="F:transcription cis-regulatory region binding"/>
    <property type="evidence" value="ECO:0007669"/>
    <property type="project" value="TreeGrafter"/>
</dbReference>
<dbReference type="GO" id="GO:0019285">
    <property type="term" value="P:glycine betaine biosynthetic process from choline"/>
    <property type="evidence" value="ECO:0007669"/>
    <property type="project" value="UniProtKB-UniRule"/>
</dbReference>
<dbReference type="GO" id="GO:0045892">
    <property type="term" value="P:negative regulation of DNA-templated transcription"/>
    <property type="evidence" value="ECO:0007669"/>
    <property type="project" value="UniProtKB-UniRule"/>
</dbReference>
<dbReference type="Gene3D" id="1.10.357.10">
    <property type="entry name" value="Tetracycline Repressor, domain 2"/>
    <property type="match status" value="1"/>
</dbReference>
<dbReference type="HAMAP" id="MF_00768">
    <property type="entry name" value="HTH_type_BetI"/>
    <property type="match status" value="1"/>
</dbReference>
<dbReference type="InterPro" id="IPR039538">
    <property type="entry name" value="BetI_C"/>
</dbReference>
<dbReference type="InterPro" id="IPR023772">
    <property type="entry name" value="DNA-bd_HTH_TetR-type_CS"/>
</dbReference>
<dbReference type="InterPro" id="IPR009057">
    <property type="entry name" value="Homeodomain-like_sf"/>
</dbReference>
<dbReference type="InterPro" id="IPR050109">
    <property type="entry name" value="HTH-type_TetR-like_transc_reg"/>
</dbReference>
<dbReference type="InterPro" id="IPR001647">
    <property type="entry name" value="HTH_TetR"/>
</dbReference>
<dbReference type="InterPro" id="IPR036271">
    <property type="entry name" value="Tet_transcr_reg_TetR-rel_C_sf"/>
</dbReference>
<dbReference type="InterPro" id="IPR017757">
    <property type="entry name" value="Tscrpt_rep_BetI"/>
</dbReference>
<dbReference type="NCBIfam" id="TIGR03384">
    <property type="entry name" value="betaine_BetI"/>
    <property type="match status" value="1"/>
</dbReference>
<dbReference type="NCBIfam" id="NF001978">
    <property type="entry name" value="PRK00767.1"/>
    <property type="match status" value="1"/>
</dbReference>
<dbReference type="PANTHER" id="PTHR30055:SF234">
    <property type="entry name" value="HTH-TYPE TRANSCRIPTIONAL REGULATOR BETI"/>
    <property type="match status" value="1"/>
</dbReference>
<dbReference type="PANTHER" id="PTHR30055">
    <property type="entry name" value="HTH-TYPE TRANSCRIPTIONAL REGULATOR RUTR"/>
    <property type="match status" value="1"/>
</dbReference>
<dbReference type="Pfam" id="PF13977">
    <property type="entry name" value="TetR_C_6"/>
    <property type="match status" value="1"/>
</dbReference>
<dbReference type="Pfam" id="PF00440">
    <property type="entry name" value="TetR_N"/>
    <property type="match status" value="1"/>
</dbReference>
<dbReference type="SUPFAM" id="SSF46689">
    <property type="entry name" value="Homeodomain-like"/>
    <property type="match status" value="1"/>
</dbReference>
<dbReference type="SUPFAM" id="SSF48498">
    <property type="entry name" value="Tetracyclin repressor-like, C-terminal domain"/>
    <property type="match status" value="1"/>
</dbReference>
<dbReference type="PROSITE" id="PS01081">
    <property type="entry name" value="HTH_TETR_1"/>
    <property type="match status" value="1"/>
</dbReference>
<dbReference type="PROSITE" id="PS50977">
    <property type="entry name" value="HTH_TETR_2"/>
    <property type="match status" value="1"/>
</dbReference>
<keyword id="KW-0238">DNA-binding</keyword>
<keyword id="KW-0678">Repressor</keyword>
<keyword id="KW-0804">Transcription</keyword>
<keyword id="KW-0805">Transcription regulation</keyword>
<gene>
    <name evidence="2" type="primary">betI</name>
    <name type="ordered locus">VS_II0056</name>
</gene>
<organism>
    <name type="scientific">Vibrio atlanticus (strain LGP32)</name>
    <name type="common">Vibrio splendidus (strain Mel32)</name>
    <dbReference type="NCBI Taxonomy" id="575788"/>
    <lineage>
        <taxon>Bacteria</taxon>
        <taxon>Pseudomonadati</taxon>
        <taxon>Pseudomonadota</taxon>
        <taxon>Gammaproteobacteria</taxon>
        <taxon>Vibrionales</taxon>
        <taxon>Vibrionaceae</taxon>
        <taxon>Vibrio</taxon>
    </lineage>
</organism>
<accession>B7VQ27</accession>
<proteinExistence type="inferred from homology"/>
<name>BETI_VIBA3</name>